<reference key="1">
    <citation type="submission" date="2007-12" db="EMBL/GenBank/DDBJ databases">
        <title>Brucella suis ATCC 23445 whole genome shotgun sequencing project.</title>
        <authorList>
            <person name="Setubal J.C."/>
            <person name="Bowns C."/>
            <person name="Boyle S."/>
            <person name="Crasta O.R."/>
            <person name="Czar M.J."/>
            <person name="Dharmanolla C."/>
            <person name="Gillespie J.J."/>
            <person name="Kenyon R.W."/>
            <person name="Lu J."/>
            <person name="Mane S."/>
            <person name="Mohapatra S."/>
            <person name="Nagrani S."/>
            <person name="Purkayastha A."/>
            <person name="Rajasimha H.K."/>
            <person name="Shallom J.M."/>
            <person name="Shallom S."/>
            <person name="Shukla M."/>
            <person name="Snyder E.E."/>
            <person name="Sobral B.W."/>
            <person name="Wattam A.R."/>
            <person name="Will R."/>
            <person name="Williams K."/>
            <person name="Yoo H."/>
            <person name="Bruce D."/>
            <person name="Detter C."/>
            <person name="Munk C."/>
            <person name="Brettin T.S."/>
        </authorList>
    </citation>
    <scope>NUCLEOTIDE SEQUENCE [LARGE SCALE GENOMIC DNA]</scope>
    <source>
        <strain>ATCC 23445 / NCTC 10510</strain>
    </source>
</reference>
<gene>
    <name evidence="1" type="primary">serS</name>
    <name type="ordered locus">BSUIS_A0923</name>
</gene>
<proteinExistence type="inferred from homology"/>
<organism>
    <name type="scientific">Brucella suis (strain ATCC 23445 / NCTC 10510)</name>
    <dbReference type="NCBI Taxonomy" id="470137"/>
    <lineage>
        <taxon>Bacteria</taxon>
        <taxon>Pseudomonadati</taxon>
        <taxon>Pseudomonadota</taxon>
        <taxon>Alphaproteobacteria</taxon>
        <taxon>Hyphomicrobiales</taxon>
        <taxon>Brucellaceae</taxon>
        <taxon>Brucella/Ochrobactrum group</taxon>
        <taxon>Brucella</taxon>
    </lineage>
</organism>
<name>SYS_BRUSI</name>
<keyword id="KW-0030">Aminoacyl-tRNA synthetase</keyword>
<keyword id="KW-0067">ATP-binding</keyword>
<keyword id="KW-0963">Cytoplasm</keyword>
<keyword id="KW-0436">Ligase</keyword>
<keyword id="KW-0547">Nucleotide-binding</keyword>
<keyword id="KW-0648">Protein biosynthesis</keyword>
<dbReference type="EC" id="6.1.1.11" evidence="1"/>
<dbReference type="EMBL" id="CP000911">
    <property type="protein sequence ID" value="ABY37990.1"/>
    <property type="molecule type" value="Genomic_DNA"/>
</dbReference>
<dbReference type="RefSeq" id="WP_004690784.1">
    <property type="nucleotide sequence ID" value="NC_010169.1"/>
</dbReference>
<dbReference type="SMR" id="B0CLL0"/>
<dbReference type="GeneID" id="55590590"/>
<dbReference type="KEGG" id="bmt:BSUIS_A0923"/>
<dbReference type="HOGENOM" id="CLU_023797_1_1_5"/>
<dbReference type="UniPathway" id="UPA00906">
    <property type="reaction ID" value="UER00895"/>
</dbReference>
<dbReference type="Proteomes" id="UP000008545">
    <property type="component" value="Chromosome I"/>
</dbReference>
<dbReference type="GO" id="GO:0005737">
    <property type="term" value="C:cytoplasm"/>
    <property type="evidence" value="ECO:0007669"/>
    <property type="project" value="UniProtKB-SubCell"/>
</dbReference>
<dbReference type="GO" id="GO:0005524">
    <property type="term" value="F:ATP binding"/>
    <property type="evidence" value="ECO:0007669"/>
    <property type="project" value="UniProtKB-UniRule"/>
</dbReference>
<dbReference type="GO" id="GO:0004828">
    <property type="term" value="F:serine-tRNA ligase activity"/>
    <property type="evidence" value="ECO:0007669"/>
    <property type="project" value="UniProtKB-UniRule"/>
</dbReference>
<dbReference type="GO" id="GO:0016260">
    <property type="term" value="P:selenocysteine biosynthetic process"/>
    <property type="evidence" value="ECO:0007669"/>
    <property type="project" value="UniProtKB-UniRule"/>
</dbReference>
<dbReference type="GO" id="GO:0006434">
    <property type="term" value="P:seryl-tRNA aminoacylation"/>
    <property type="evidence" value="ECO:0007669"/>
    <property type="project" value="UniProtKB-UniRule"/>
</dbReference>
<dbReference type="CDD" id="cd00770">
    <property type="entry name" value="SerRS_core"/>
    <property type="match status" value="1"/>
</dbReference>
<dbReference type="Gene3D" id="3.30.930.10">
    <property type="entry name" value="Bira Bifunctional Protein, Domain 2"/>
    <property type="match status" value="1"/>
</dbReference>
<dbReference type="Gene3D" id="1.10.287.40">
    <property type="entry name" value="Serine-tRNA synthetase, tRNA binding domain"/>
    <property type="match status" value="1"/>
</dbReference>
<dbReference type="HAMAP" id="MF_00176">
    <property type="entry name" value="Ser_tRNA_synth_type1"/>
    <property type="match status" value="1"/>
</dbReference>
<dbReference type="InterPro" id="IPR002314">
    <property type="entry name" value="aa-tRNA-synt_IIb"/>
</dbReference>
<dbReference type="InterPro" id="IPR006195">
    <property type="entry name" value="aa-tRNA-synth_II"/>
</dbReference>
<dbReference type="InterPro" id="IPR045864">
    <property type="entry name" value="aa-tRNA-synth_II/BPL/LPL"/>
</dbReference>
<dbReference type="InterPro" id="IPR002317">
    <property type="entry name" value="Ser-tRNA-ligase_type_1"/>
</dbReference>
<dbReference type="InterPro" id="IPR015866">
    <property type="entry name" value="Ser-tRNA-synth_1_N"/>
</dbReference>
<dbReference type="InterPro" id="IPR042103">
    <property type="entry name" value="SerRS_1_N_sf"/>
</dbReference>
<dbReference type="InterPro" id="IPR033729">
    <property type="entry name" value="SerRS_core"/>
</dbReference>
<dbReference type="InterPro" id="IPR010978">
    <property type="entry name" value="tRNA-bd_arm"/>
</dbReference>
<dbReference type="NCBIfam" id="TIGR00414">
    <property type="entry name" value="serS"/>
    <property type="match status" value="1"/>
</dbReference>
<dbReference type="PANTHER" id="PTHR43697:SF1">
    <property type="entry name" value="SERINE--TRNA LIGASE"/>
    <property type="match status" value="1"/>
</dbReference>
<dbReference type="PANTHER" id="PTHR43697">
    <property type="entry name" value="SERYL-TRNA SYNTHETASE"/>
    <property type="match status" value="1"/>
</dbReference>
<dbReference type="Pfam" id="PF02403">
    <property type="entry name" value="Seryl_tRNA_N"/>
    <property type="match status" value="1"/>
</dbReference>
<dbReference type="Pfam" id="PF00587">
    <property type="entry name" value="tRNA-synt_2b"/>
    <property type="match status" value="1"/>
</dbReference>
<dbReference type="PIRSF" id="PIRSF001529">
    <property type="entry name" value="Ser-tRNA-synth_IIa"/>
    <property type="match status" value="1"/>
</dbReference>
<dbReference type="PRINTS" id="PR00981">
    <property type="entry name" value="TRNASYNTHSER"/>
</dbReference>
<dbReference type="SUPFAM" id="SSF55681">
    <property type="entry name" value="Class II aaRS and biotin synthetases"/>
    <property type="match status" value="1"/>
</dbReference>
<dbReference type="SUPFAM" id="SSF46589">
    <property type="entry name" value="tRNA-binding arm"/>
    <property type="match status" value="1"/>
</dbReference>
<dbReference type="PROSITE" id="PS50862">
    <property type="entry name" value="AA_TRNA_LIGASE_II"/>
    <property type="match status" value="1"/>
</dbReference>
<comment type="function">
    <text evidence="1">Catalyzes the attachment of serine to tRNA(Ser). Is also able to aminoacylate tRNA(Sec) with serine, to form the misacylated tRNA L-seryl-tRNA(Sec), which will be further converted into selenocysteinyl-tRNA(Sec).</text>
</comment>
<comment type="catalytic activity">
    <reaction evidence="1">
        <text>tRNA(Ser) + L-serine + ATP = L-seryl-tRNA(Ser) + AMP + diphosphate + H(+)</text>
        <dbReference type="Rhea" id="RHEA:12292"/>
        <dbReference type="Rhea" id="RHEA-COMP:9669"/>
        <dbReference type="Rhea" id="RHEA-COMP:9703"/>
        <dbReference type="ChEBI" id="CHEBI:15378"/>
        <dbReference type="ChEBI" id="CHEBI:30616"/>
        <dbReference type="ChEBI" id="CHEBI:33019"/>
        <dbReference type="ChEBI" id="CHEBI:33384"/>
        <dbReference type="ChEBI" id="CHEBI:78442"/>
        <dbReference type="ChEBI" id="CHEBI:78533"/>
        <dbReference type="ChEBI" id="CHEBI:456215"/>
        <dbReference type="EC" id="6.1.1.11"/>
    </reaction>
</comment>
<comment type="catalytic activity">
    <reaction evidence="1">
        <text>tRNA(Sec) + L-serine + ATP = L-seryl-tRNA(Sec) + AMP + diphosphate + H(+)</text>
        <dbReference type="Rhea" id="RHEA:42580"/>
        <dbReference type="Rhea" id="RHEA-COMP:9742"/>
        <dbReference type="Rhea" id="RHEA-COMP:10128"/>
        <dbReference type="ChEBI" id="CHEBI:15378"/>
        <dbReference type="ChEBI" id="CHEBI:30616"/>
        <dbReference type="ChEBI" id="CHEBI:33019"/>
        <dbReference type="ChEBI" id="CHEBI:33384"/>
        <dbReference type="ChEBI" id="CHEBI:78442"/>
        <dbReference type="ChEBI" id="CHEBI:78533"/>
        <dbReference type="ChEBI" id="CHEBI:456215"/>
        <dbReference type="EC" id="6.1.1.11"/>
    </reaction>
</comment>
<comment type="pathway">
    <text evidence="1">Aminoacyl-tRNA biosynthesis; selenocysteinyl-tRNA(Sec) biosynthesis; L-seryl-tRNA(Sec) from L-serine and tRNA(Sec): step 1/1.</text>
</comment>
<comment type="subunit">
    <text evidence="1">Homodimer. The tRNA molecule binds across the dimer.</text>
</comment>
<comment type="subcellular location">
    <subcellularLocation>
        <location evidence="1">Cytoplasm</location>
    </subcellularLocation>
</comment>
<comment type="domain">
    <text evidence="1">Consists of two distinct domains, a catalytic core and a N-terminal extension that is involved in tRNA binding.</text>
</comment>
<comment type="similarity">
    <text evidence="1">Belongs to the class-II aminoacyl-tRNA synthetase family. Type-1 seryl-tRNA synthetase subfamily.</text>
</comment>
<sequence>MLDIKWIRENPETLDKALAKRGAAPLSSELIALDEKRREHVGKVQAAQERRNAASKEIGKAMAAKDMGTAEKLKAEVGELKDFLAHAEEDERRLSKELSDALSTIPNIPLDDVPLGKDESDNVELRRIGNPHNFSFQPKEHFELGEALGYMDFERAAKLAGARFTVLKGPLARLERALGQFMLDLHTTEHGYTEVMPPLMVRDEAVYGTGQLPKFSEDLFRTTDGRWLIPTAEVPLTNLVAEEIVDMKGLPLRFTALTPCFRSEAGSAGRDTRGMLRQHQFLKVEMVSITDAESSVAEHERMTACAEEVLKRLGLPFRTVVLCTGDMGFGAQRTYDIEVWLPGQNTYREISSCSTCGDFQGRRMNARYRPEGEKSTRFVHTLNGSGVAVGRALIAVMENYQQEDGSIHIPEALQPYIGGLTRIEKAA</sequence>
<feature type="chain" id="PRO_1000077188" description="Serine--tRNA ligase">
    <location>
        <begin position="1"/>
        <end position="427"/>
    </location>
</feature>
<feature type="binding site" evidence="1">
    <location>
        <begin position="231"/>
        <end position="233"/>
    </location>
    <ligand>
        <name>L-serine</name>
        <dbReference type="ChEBI" id="CHEBI:33384"/>
    </ligand>
</feature>
<feature type="binding site" evidence="1">
    <location>
        <begin position="262"/>
        <end position="264"/>
    </location>
    <ligand>
        <name>ATP</name>
        <dbReference type="ChEBI" id="CHEBI:30616"/>
    </ligand>
</feature>
<feature type="binding site" evidence="1">
    <location>
        <position position="285"/>
    </location>
    <ligand>
        <name>L-serine</name>
        <dbReference type="ChEBI" id="CHEBI:33384"/>
    </ligand>
</feature>
<feature type="binding site" evidence="1">
    <location>
        <begin position="349"/>
        <end position="352"/>
    </location>
    <ligand>
        <name>ATP</name>
        <dbReference type="ChEBI" id="CHEBI:30616"/>
    </ligand>
</feature>
<feature type="binding site" evidence="1">
    <location>
        <position position="385"/>
    </location>
    <ligand>
        <name>L-serine</name>
        <dbReference type="ChEBI" id="CHEBI:33384"/>
    </ligand>
</feature>
<evidence type="ECO:0000255" key="1">
    <source>
        <dbReference type="HAMAP-Rule" id="MF_00176"/>
    </source>
</evidence>
<protein>
    <recommendedName>
        <fullName evidence="1">Serine--tRNA ligase</fullName>
        <ecNumber evidence="1">6.1.1.11</ecNumber>
    </recommendedName>
    <alternativeName>
        <fullName evidence="1">Seryl-tRNA synthetase</fullName>
        <shortName evidence="1">SerRS</shortName>
    </alternativeName>
    <alternativeName>
        <fullName evidence="1">Seryl-tRNA(Ser/Sec) synthetase</fullName>
    </alternativeName>
</protein>
<accession>B0CLL0</accession>